<protein>
    <recommendedName>
        <fullName evidence="1">3-dehydroquinate synthase</fullName>
        <shortName evidence="1">DHQS</shortName>
        <ecNumber evidence="1">4.2.3.4</ecNumber>
    </recommendedName>
</protein>
<keyword id="KW-0028">Amino-acid biosynthesis</keyword>
<keyword id="KW-0057">Aromatic amino acid biosynthesis</keyword>
<keyword id="KW-0170">Cobalt</keyword>
<keyword id="KW-0963">Cytoplasm</keyword>
<keyword id="KW-0456">Lyase</keyword>
<keyword id="KW-0479">Metal-binding</keyword>
<keyword id="KW-0520">NAD</keyword>
<keyword id="KW-0547">Nucleotide-binding</keyword>
<keyword id="KW-1185">Reference proteome</keyword>
<keyword id="KW-0862">Zinc</keyword>
<gene>
    <name evidence="1" type="primary">aroB</name>
    <name type="ordered locus">Nmul_A0703</name>
</gene>
<reference key="1">
    <citation type="submission" date="2005-08" db="EMBL/GenBank/DDBJ databases">
        <title>Complete sequence of chromosome 1 of Nitrosospira multiformis ATCC 25196.</title>
        <authorList>
            <person name="Copeland A."/>
            <person name="Lucas S."/>
            <person name="Lapidus A."/>
            <person name="Barry K."/>
            <person name="Detter J.C."/>
            <person name="Glavina T."/>
            <person name="Hammon N."/>
            <person name="Israni S."/>
            <person name="Pitluck S."/>
            <person name="Chain P."/>
            <person name="Malfatti S."/>
            <person name="Shin M."/>
            <person name="Vergez L."/>
            <person name="Schmutz J."/>
            <person name="Larimer F."/>
            <person name="Land M."/>
            <person name="Hauser L."/>
            <person name="Kyrpides N."/>
            <person name="Lykidis A."/>
            <person name="Richardson P."/>
        </authorList>
    </citation>
    <scope>NUCLEOTIDE SEQUENCE [LARGE SCALE GENOMIC DNA]</scope>
    <source>
        <strain>ATCC 25196 / NCIMB 11849 / C 71</strain>
    </source>
</reference>
<evidence type="ECO:0000255" key="1">
    <source>
        <dbReference type="HAMAP-Rule" id="MF_00110"/>
    </source>
</evidence>
<comment type="function">
    <text evidence="1">Catalyzes the conversion of 3-deoxy-D-arabino-heptulosonate 7-phosphate (DAHP) to dehydroquinate (DHQ).</text>
</comment>
<comment type="catalytic activity">
    <reaction evidence="1">
        <text>7-phospho-2-dehydro-3-deoxy-D-arabino-heptonate = 3-dehydroquinate + phosphate</text>
        <dbReference type="Rhea" id="RHEA:21968"/>
        <dbReference type="ChEBI" id="CHEBI:32364"/>
        <dbReference type="ChEBI" id="CHEBI:43474"/>
        <dbReference type="ChEBI" id="CHEBI:58394"/>
        <dbReference type="EC" id="4.2.3.4"/>
    </reaction>
</comment>
<comment type="cofactor">
    <cofactor evidence="1">
        <name>Co(2+)</name>
        <dbReference type="ChEBI" id="CHEBI:48828"/>
    </cofactor>
    <cofactor evidence="1">
        <name>Zn(2+)</name>
        <dbReference type="ChEBI" id="CHEBI:29105"/>
    </cofactor>
    <text evidence="1">Binds 1 divalent metal cation per subunit. Can use either Co(2+) or Zn(2+).</text>
</comment>
<comment type="cofactor">
    <cofactor evidence="1">
        <name>NAD(+)</name>
        <dbReference type="ChEBI" id="CHEBI:57540"/>
    </cofactor>
</comment>
<comment type="pathway">
    <text evidence="1">Metabolic intermediate biosynthesis; chorismate biosynthesis; chorismate from D-erythrose 4-phosphate and phosphoenolpyruvate: step 2/7.</text>
</comment>
<comment type="subcellular location">
    <subcellularLocation>
        <location evidence="1">Cytoplasm</location>
    </subcellularLocation>
</comment>
<comment type="similarity">
    <text evidence="1">Belongs to the sugar phosphate cyclases superfamily. Dehydroquinate synthase family.</text>
</comment>
<dbReference type="EC" id="4.2.3.4" evidence="1"/>
<dbReference type="EMBL" id="CP000103">
    <property type="protein sequence ID" value="ABB74010.1"/>
    <property type="molecule type" value="Genomic_DNA"/>
</dbReference>
<dbReference type="RefSeq" id="WP_011380060.1">
    <property type="nucleotide sequence ID" value="NC_007614.1"/>
</dbReference>
<dbReference type="SMR" id="Q2YB61"/>
<dbReference type="STRING" id="323848.Nmul_A0703"/>
<dbReference type="KEGG" id="nmu:Nmul_A0703"/>
<dbReference type="eggNOG" id="COG0337">
    <property type="taxonomic scope" value="Bacteria"/>
</dbReference>
<dbReference type="HOGENOM" id="CLU_001201_0_2_4"/>
<dbReference type="OrthoDB" id="9806583at2"/>
<dbReference type="UniPathway" id="UPA00053">
    <property type="reaction ID" value="UER00085"/>
</dbReference>
<dbReference type="Proteomes" id="UP000002718">
    <property type="component" value="Chromosome"/>
</dbReference>
<dbReference type="GO" id="GO:0005737">
    <property type="term" value="C:cytoplasm"/>
    <property type="evidence" value="ECO:0007669"/>
    <property type="project" value="UniProtKB-SubCell"/>
</dbReference>
<dbReference type="GO" id="GO:0003856">
    <property type="term" value="F:3-dehydroquinate synthase activity"/>
    <property type="evidence" value="ECO:0007669"/>
    <property type="project" value="UniProtKB-UniRule"/>
</dbReference>
<dbReference type="GO" id="GO:0046872">
    <property type="term" value="F:metal ion binding"/>
    <property type="evidence" value="ECO:0007669"/>
    <property type="project" value="UniProtKB-KW"/>
</dbReference>
<dbReference type="GO" id="GO:0000166">
    <property type="term" value="F:nucleotide binding"/>
    <property type="evidence" value="ECO:0007669"/>
    <property type="project" value="UniProtKB-KW"/>
</dbReference>
<dbReference type="GO" id="GO:0008652">
    <property type="term" value="P:amino acid biosynthetic process"/>
    <property type="evidence" value="ECO:0007669"/>
    <property type="project" value="UniProtKB-KW"/>
</dbReference>
<dbReference type="GO" id="GO:0009073">
    <property type="term" value="P:aromatic amino acid family biosynthetic process"/>
    <property type="evidence" value="ECO:0007669"/>
    <property type="project" value="UniProtKB-KW"/>
</dbReference>
<dbReference type="GO" id="GO:0009423">
    <property type="term" value="P:chorismate biosynthetic process"/>
    <property type="evidence" value="ECO:0007669"/>
    <property type="project" value="UniProtKB-UniRule"/>
</dbReference>
<dbReference type="CDD" id="cd08195">
    <property type="entry name" value="DHQS"/>
    <property type="match status" value="1"/>
</dbReference>
<dbReference type="FunFam" id="1.20.1090.10:FF:000002">
    <property type="entry name" value="3-dehydroquinate synthase"/>
    <property type="match status" value="1"/>
</dbReference>
<dbReference type="FunFam" id="3.40.50.1970:FF:000001">
    <property type="entry name" value="3-dehydroquinate synthase"/>
    <property type="match status" value="1"/>
</dbReference>
<dbReference type="Gene3D" id="3.40.50.1970">
    <property type="match status" value="1"/>
</dbReference>
<dbReference type="Gene3D" id="1.20.1090.10">
    <property type="entry name" value="Dehydroquinate synthase-like - alpha domain"/>
    <property type="match status" value="1"/>
</dbReference>
<dbReference type="HAMAP" id="MF_00110">
    <property type="entry name" value="DHQ_synthase"/>
    <property type="match status" value="1"/>
</dbReference>
<dbReference type="InterPro" id="IPR050071">
    <property type="entry name" value="Dehydroquinate_synthase"/>
</dbReference>
<dbReference type="InterPro" id="IPR016037">
    <property type="entry name" value="DHQ_synth_AroB"/>
</dbReference>
<dbReference type="InterPro" id="IPR030963">
    <property type="entry name" value="DHQ_synth_fam"/>
</dbReference>
<dbReference type="InterPro" id="IPR030960">
    <property type="entry name" value="DHQS/DOIS_N"/>
</dbReference>
<dbReference type="InterPro" id="IPR056179">
    <property type="entry name" value="DHQS_C"/>
</dbReference>
<dbReference type="NCBIfam" id="TIGR01357">
    <property type="entry name" value="aroB"/>
    <property type="match status" value="1"/>
</dbReference>
<dbReference type="PANTHER" id="PTHR43622">
    <property type="entry name" value="3-DEHYDROQUINATE SYNTHASE"/>
    <property type="match status" value="1"/>
</dbReference>
<dbReference type="PANTHER" id="PTHR43622:SF7">
    <property type="entry name" value="3-DEHYDROQUINATE SYNTHASE, CHLOROPLASTIC"/>
    <property type="match status" value="1"/>
</dbReference>
<dbReference type="Pfam" id="PF01761">
    <property type="entry name" value="DHQ_synthase"/>
    <property type="match status" value="1"/>
</dbReference>
<dbReference type="Pfam" id="PF24621">
    <property type="entry name" value="DHQS_C"/>
    <property type="match status" value="1"/>
</dbReference>
<dbReference type="PIRSF" id="PIRSF001455">
    <property type="entry name" value="DHQ_synth"/>
    <property type="match status" value="1"/>
</dbReference>
<dbReference type="SUPFAM" id="SSF56796">
    <property type="entry name" value="Dehydroquinate synthase-like"/>
    <property type="match status" value="1"/>
</dbReference>
<feature type="chain" id="PRO_0000231103" description="3-dehydroquinate synthase">
    <location>
        <begin position="1"/>
        <end position="366"/>
    </location>
</feature>
<feature type="binding site" evidence="1">
    <location>
        <begin position="75"/>
        <end position="80"/>
    </location>
    <ligand>
        <name>NAD(+)</name>
        <dbReference type="ChEBI" id="CHEBI:57540"/>
    </ligand>
</feature>
<feature type="binding site" evidence="1">
    <location>
        <begin position="109"/>
        <end position="113"/>
    </location>
    <ligand>
        <name>NAD(+)</name>
        <dbReference type="ChEBI" id="CHEBI:57540"/>
    </ligand>
</feature>
<feature type="binding site" evidence="1">
    <location>
        <begin position="133"/>
        <end position="134"/>
    </location>
    <ligand>
        <name>NAD(+)</name>
        <dbReference type="ChEBI" id="CHEBI:57540"/>
    </ligand>
</feature>
<feature type="binding site" evidence="1">
    <location>
        <position position="146"/>
    </location>
    <ligand>
        <name>NAD(+)</name>
        <dbReference type="ChEBI" id="CHEBI:57540"/>
    </ligand>
</feature>
<feature type="binding site" evidence="1">
    <location>
        <position position="155"/>
    </location>
    <ligand>
        <name>NAD(+)</name>
        <dbReference type="ChEBI" id="CHEBI:57540"/>
    </ligand>
</feature>
<feature type="binding site" evidence="1">
    <location>
        <begin position="173"/>
        <end position="176"/>
    </location>
    <ligand>
        <name>NAD(+)</name>
        <dbReference type="ChEBI" id="CHEBI:57540"/>
    </ligand>
</feature>
<feature type="binding site" evidence="1">
    <location>
        <position position="188"/>
    </location>
    <ligand>
        <name>Zn(2+)</name>
        <dbReference type="ChEBI" id="CHEBI:29105"/>
    </ligand>
</feature>
<feature type="binding site" evidence="1">
    <location>
        <position position="251"/>
    </location>
    <ligand>
        <name>Zn(2+)</name>
        <dbReference type="ChEBI" id="CHEBI:29105"/>
    </ligand>
</feature>
<feature type="binding site" evidence="1">
    <location>
        <position position="268"/>
    </location>
    <ligand>
        <name>Zn(2+)</name>
        <dbReference type="ChEBI" id="CHEBI:29105"/>
    </ligand>
</feature>
<sequence length="366" mass="39968">METVTVNLVSTPAQRGYPIHIGANILTQPELILDYLDQKRVAIVTNTTVGPLYLEKFRADLSVHGMVSVPIVLPDGEEYKNWETLNLIFDALLTHRCERNTPLIALGGGVVGDLTGFAAATYLRGVPFIQVPTTLLAQVDSSVGGKTGINHPLGKNMIGAFYQPQAVVADTSTLDTLPDRELRAGIAEVIKYGLIRDPAFFDWIESHIELLLRRDNSILTDAIKRSCQHKAEVVEEDERESGMRALLNLGHTFGHAIENAMGYGNWLHGEAVAAGTMLAAEVSRRMGMIGEEDVDRVRNLYVKTGLPVIAPNLGPEKYLHLMGLDKKVQGGKMRFILLENIGRATVHADVPAAILTEVLTECTADA</sequence>
<accession>Q2YB61</accession>
<name>AROB_NITMU</name>
<organism>
    <name type="scientific">Nitrosospira multiformis (strain ATCC 25196 / NCIMB 11849 / C 71)</name>
    <dbReference type="NCBI Taxonomy" id="323848"/>
    <lineage>
        <taxon>Bacteria</taxon>
        <taxon>Pseudomonadati</taxon>
        <taxon>Pseudomonadota</taxon>
        <taxon>Betaproteobacteria</taxon>
        <taxon>Nitrosomonadales</taxon>
        <taxon>Nitrosomonadaceae</taxon>
        <taxon>Nitrosospira</taxon>
    </lineage>
</organism>
<proteinExistence type="inferred from homology"/>